<dbReference type="EC" id="7.1.1.-" evidence="1"/>
<dbReference type="EMBL" id="CP000518">
    <property type="protein sequence ID" value="ABL90802.1"/>
    <property type="molecule type" value="Genomic_DNA"/>
</dbReference>
<dbReference type="SMR" id="A1UD94"/>
<dbReference type="STRING" id="189918.Mkms_1594"/>
<dbReference type="KEGG" id="mkm:Mkms_1594"/>
<dbReference type="HOGENOM" id="CLU_144724_0_0_11"/>
<dbReference type="OrthoDB" id="9810120at2"/>
<dbReference type="GO" id="GO:0030964">
    <property type="term" value="C:NADH dehydrogenase complex"/>
    <property type="evidence" value="ECO:0007669"/>
    <property type="project" value="TreeGrafter"/>
</dbReference>
<dbReference type="GO" id="GO:0005886">
    <property type="term" value="C:plasma membrane"/>
    <property type="evidence" value="ECO:0007669"/>
    <property type="project" value="UniProtKB-SubCell"/>
</dbReference>
<dbReference type="GO" id="GO:0050136">
    <property type="term" value="F:NADH:ubiquinone reductase (non-electrogenic) activity"/>
    <property type="evidence" value="ECO:0007669"/>
    <property type="project" value="UniProtKB-UniRule"/>
</dbReference>
<dbReference type="GO" id="GO:0048038">
    <property type="term" value="F:quinone binding"/>
    <property type="evidence" value="ECO:0007669"/>
    <property type="project" value="UniProtKB-KW"/>
</dbReference>
<dbReference type="GO" id="GO:0042773">
    <property type="term" value="P:ATP synthesis coupled electron transport"/>
    <property type="evidence" value="ECO:0007669"/>
    <property type="project" value="InterPro"/>
</dbReference>
<dbReference type="FunFam" id="1.10.287.3510:FF:000001">
    <property type="entry name" value="NADH-quinone oxidoreductase subunit K"/>
    <property type="match status" value="1"/>
</dbReference>
<dbReference type="Gene3D" id="1.10.287.3510">
    <property type="match status" value="1"/>
</dbReference>
<dbReference type="HAMAP" id="MF_01456">
    <property type="entry name" value="NDH1_NuoK"/>
    <property type="match status" value="1"/>
</dbReference>
<dbReference type="InterPro" id="IPR001133">
    <property type="entry name" value="NADH_UbQ_OxRdtase_chain4L/K"/>
</dbReference>
<dbReference type="InterPro" id="IPR039428">
    <property type="entry name" value="NUOK/Mnh_C1-like"/>
</dbReference>
<dbReference type="NCBIfam" id="NF004320">
    <property type="entry name" value="PRK05715.1-2"/>
    <property type="match status" value="1"/>
</dbReference>
<dbReference type="NCBIfam" id="NF004321">
    <property type="entry name" value="PRK05715.1-3"/>
    <property type="match status" value="1"/>
</dbReference>
<dbReference type="NCBIfam" id="NF004323">
    <property type="entry name" value="PRK05715.1-5"/>
    <property type="match status" value="1"/>
</dbReference>
<dbReference type="PANTHER" id="PTHR11434:SF21">
    <property type="entry name" value="NADH DEHYDROGENASE SUBUNIT 4L-RELATED"/>
    <property type="match status" value="1"/>
</dbReference>
<dbReference type="PANTHER" id="PTHR11434">
    <property type="entry name" value="NADH-UBIQUINONE OXIDOREDUCTASE SUBUNIT ND4L"/>
    <property type="match status" value="1"/>
</dbReference>
<dbReference type="Pfam" id="PF00420">
    <property type="entry name" value="Oxidored_q2"/>
    <property type="match status" value="1"/>
</dbReference>
<proteinExistence type="inferred from homology"/>
<sequence>MNPDNYLHLSALLFTIGAAGVLLRRNVIVVFMCVELMLNAANLAFVAFSRMHGQLDGQVVAFFTMVVAACEVVIGLAIIMTIYRARRSASVDDANLLKH</sequence>
<keyword id="KW-1003">Cell membrane</keyword>
<keyword id="KW-0472">Membrane</keyword>
<keyword id="KW-0520">NAD</keyword>
<keyword id="KW-0874">Quinone</keyword>
<keyword id="KW-1278">Translocase</keyword>
<keyword id="KW-0812">Transmembrane</keyword>
<keyword id="KW-1133">Transmembrane helix</keyword>
<keyword id="KW-0813">Transport</keyword>
<organism>
    <name type="scientific">Mycobacterium sp. (strain KMS)</name>
    <dbReference type="NCBI Taxonomy" id="189918"/>
    <lineage>
        <taxon>Bacteria</taxon>
        <taxon>Bacillati</taxon>
        <taxon>Actinomycetota</taxon>
        <taxon>Actinomycetes</taxon>
        <taxon>Mycobacteriales</taxon>
        <taxon>Mycobacteriaceae</taxon>
        <taxon>Mycobacterium</taxon>
    </lineage>
</organism>
<reference key="1">
    <citation type="submission" date="2006-12" db="EMBL/GenBank/DDBJ databases">
        <title>Complete sequence of chromosome of Mycobacterium sp. KMS.</title>
        <authorList>
            <consortium name="US DOE Joint Genome Institute"/>
            <person name="Copeland A."/>
            <person name="Lucas S."/>
            <person name="Lapidus A."/>
            <person name="Barry K."/>
            <person name="Detter J.C."/>
            <person name="Glavina del Rio T."/>
            <person name="Hammon N."/>
            <person name="Israni S."/>
            <person name="Dalin E."/>
            <person name="Tice H."/>
            <person name="Pitluck S."/>
            <person name="Kiss H."/>
            <person name="Brettin T."/>
            <person name="Bruce D."/>
            <person name="Han C."/>
            <person name="Tapia R."/>
            <person name="Gilna P."/>
            <person name="Schmutz J."/>
            <person name="Larimer F."/>
            <person name="Land M."/>
            <person name="Hauser L."/>
            <person name="Kyrpides N."/>
            <person name="Mikhailova N."/>
            <person name="Miller C.D."/>
            <person name="Richardson P."/>
        </authorList>
    </citation>
    <scope>NUCLEOTIDE SEQUENCE [LARGE SCALE GENOMIC DNA]</scope>
    <source>
        <strain>KMS</strain>
    </source>
</reference>
<protein>
    <recommendedName>
        <fullName evidence="1">NADH-quinone oxidoreductase subunit K</fullName>
        <ecNumber evidence="1">7.1.1.-</ecNumber>
    </recommendedName>
    <alternativeName>
        <fullName evidence="1">NADH dehydrogenase I subunit K</fullName>
    </alternativeName>
    <alternativeName>
        <fullName evidence="1">NDH-1 subunit K</fullName>
    </alternativeName>
</protein>
<comment type="function">
    <text evidence="1">NDH-1 shuttles electrons from NADH, via FMN and iron-sulfur (Fe-S) centers, to quinones in the respiratory chain. The immediate electron acceptor for the enzyme in this species is believed to be a menaquinone. Couples the redox reaction to proton translocation (for every two electrons transferred, four hydrogen ions are translocated across the cytoplasmic membrane), and thus conserves the redox energy in a proton gradient.</text>
</comment>
<comment type="catalytic activity">
    <reaction evidence="1">
        <text>a quinone + NADH + 5 H(+)(in) = a quinol + NAD(+) + 4 H(+)(out)</text>
        <dbReference type="Rhea" id="RHEA:57888"/>
        <dbReference type="ChEBI" id="CHEBI:15378"/>
        <dbReference type="ChEBI" id="CHEBI:24646"/>
        <dbReference type="ChEBI" id="CHEBI:57540"/>
        <dbReference type="ChEBI" id="CHEBI:57945"/>
        <dbReference type="ChEBI" id="CHEBI:132124"/>
    </reaction>
</comment>
<comment type="subunit">
    <text evidence="1">NDH-1 is composed of 14 different subunits. Subunits NuoA, H, J, K, L, M, N constitute the membrane sector of the complex.</text>
</comment>
<comment type="subcellular location">
    <subcellularLocation>
        <location evidence="1">Cell membrane</location>
        <topology evidence="1">Multi-pass membrane protein</topology>
    </subcellularLocation>
</comment>
<comment type="similarity">
    <text evidence="1">Belongs to the complex I subunit 4L family.</text>
</comment>
<name>NUOK_MYCSK</name>
<evidence type="ECO:0000255" key="1">
    <source>
        <dbReference type="HAMAP-Rule" id="MF_01456"/>
    </source>
</evidence>
<gene>
    <name evidence="1" type="primary">nuoK</name>
    <name type="ordered locus">Mkms_1594</name>
</gene>
<feature type="chain" id="PRO_0000390133" description="NADH-quinone oxidoreductase subunit K">
    <location>
        <begin position="1"/>
        <end position="99"/>
    </location>
</feature>
<feature type="transmembrane region" description="Helical" evidence="1">
    <location>
        <begin position="3"/>
        <end position="23"/>
    </location>
</feature>
<feature type="transmembrane region" description="Helical" evidence="1">
    <location>
        <begin position="28"/>
        <end position="48"/>
    </location>
</feature>
<feature type="transmembrane region" description="Helical" evidence="1">
    <location>
        <begin position="59"/>
        <end position="79"/>
    </location>
</feature>
<accession>A1UD94</accession>